<protein>
    <recommendedName>
        <fullName evidence="1">HTH-type transcriptional activator RhaR</fullName>
    </recommendedName>
    <alternativeName>
        <fullName evidence="1">L-rhamnose operon transcriptional activator RhaR</fullName>
    </alternativeName>
</protein>
<reference key="1">
    <citation type="journal article" date="2005" name="Nucleic Acids Res.">
        <title>The genome sequence of Salmonella enterica serovar Choleraesuis, a highly invasive and resistant zoonotic pathogen.</title>
        <authorList>
            <person name="Chiu C.-H."/>
            <person name="Tang P."/>
            <person name="Chu C."/>
            <person name="Hu S."/>
            <person name="Bao Q."/>
            <person name="Yu J."/>
            <person name="Chou Y.-Y."/>
            <person name="Wang H.-S."/>
            <person name="Lee Y.-S."/>
        </authorList>
    </citation>
    <scope>NUCLEOTIDE SEQUENCE [LARGE SCALE GENOMIC DNA]</scope>
    <source>
        <strain>SC-B67</strain>
    </source>
</reference>
<evidence type="ECO:0000255" key="1">
    <source>
        <dbReference type="HAMAP-Rule" id="MF_01533"/>
    </source>
</evidence>
<organism>
    <name type="scientific">Salmonella choleraesuis (strain SC-B67)</name>
    <dbReference type="NCBI Taxonomy" id="321314"/>
    <lineage>
        <taxon>Bacteria</taxon>
        <taxon>Pseudomonadati</taxon>
        <taxon>Pseudomonadota</taxon>
        <taxon>Gammaproteobacteria</taxon>
        <taxon>Enterobacterales</taxon>
        <taxon>Enterobacteriaceae</taxon>
        <taxon>Salmonella</taxon>
    </lineage>
</organism>
<accession>Q57HG7</accession>
<dbReference type="EMBL" id="AE017220">
    <property type="protein sequence ID" value="AAX67845.1"/>
    <property type="molecule type" value="Genomic_DNA"/>
</dbReference>
<dbReference type="RefSeq" id="WP_011264434.1">
    <property type="nucleotide sequence ID" value="NC_006905.1"/>
</dbReference>
<dbReference type="SMR" id="Q57HG7"/>
<dbReference type="KEGG" id="sec:SCH_3939"/>
<dbReference type="HOGENOM" id="CLU_000445_88_5_6"/>
<dbReference type="Proteomes" id="UP000000538">
    <property type="component" value="Chromosome"/>
</dbReference>
<dbReference type="GO" id="GO:0005737">
    <property type="term" value="C:cytoplasm"/>
    <property type="evidence" value="ECO:0007669"/>
    <property type="project" value="UniProtKB-SubCell"/>
</dbReference>
<dbReference type="GO" id="GO:0003700">
    <property type="term" value="F:DNA-binding transcription factor activity"/>
    <property type="evidence" value="ECO:0007669"/>
    <property type="project" value="UniProtKB-UniRule"/>
</dbReference>
<dbReference type="GO" id="GO:0043565">
    <property type="term" value="F:sequence-specific DNA binding"/>
    <property type="evidence" value="ECO:0007669"/>
    <property type="project" value="InterPro"/>
</dbReference>
<dbReference type="GO" id="GO:0045893">
    <property type="term" value="P:positive regulation of DNA-templated transcription"/>
    <property type="evidence" value="ECO:0007669"/>
    <property type="project" value="UniProtKB-UniRule"/>
</dbReference>
<dbReference type="GO" id="GO:0019299">
    <property type="term" value="P:rhamnose metabolic process"/>
    <property type="evidence" value="ECO:0007669"/>
    <property type="project" value="UniProtKB-UniRule"/>
</dbReference>
<dbReference type="CDD" id="cd06977">
    <property type="entry name" value="cupin_RhaR_RhaS-like_N"/>
    <property type="match status" value="1"/>
</dbReference>
<dbReference type="Gene3D" id="1.10.10.60">
    <property type="entry name" value="Homeodomain-like"/>
    <property type="match status" value="1"/>
</dbReference>
<dbReference type="Gene3D" id="2.60.120.10">
    <property type="entry name" value="Jelly Rolls"/>
    <property type="match status" value="1"/>
</dbReference>
<dbReference type="HAMAP" id="MF_01533">
    <property type="entry name" value="HTH_type_RhaR"/>
    <property type="match status" value="1"/>
</dbReference>
<dbReference type="InterPro" id="IPR003313">
    <property type="entry name" value="AraC-bd"/>
</dbReference>
<dbReference type="InterPro" id="IPR009057">
    <property type="entry name" value="Homeodomain-like_sf"/>
</dbReference>
<dbReference type="InterPro" id="IPR018060">
    <property type="entry name" value="HTH_AraC"/>
</dbReference>
<dbReference type="InterPro" id="IPR018062">
    <property type="entry name" value="HTH_AraC-typ_CS"/>
</dbReference>
<dbReference type="InterPro" id="IPR047220">
    <property type="entry name" value="RhaR_RhaS-like_N"/>
</dbReference>
<dbReference type="InterPro" id="IPR014710">
    <property type="entry name" value="RmlC-like_jellyroll"/>
</dbReference>
<dbReference type="InterPro" id="IPR011051">
    <property type="entry name" value="RmlC_Cupin_sf"/>
</dbReference>
<dbReference type="InterPro" id="IPR023699">
    <property type="entry name" value="Tscrpt_act_RhaR"/>
</dbReference>
<dbReference type="InterPro" id="IPR020449">
    <property type="entry name" value="Tscrpt_reg_AraC-type_HTH"/>
</dbReference>
<dbReference type="NCBIfam" id="NF010025">
    <property type="entry name" value="PRK13500.1"/>
    <property type="match status" value="1"/>
</dbReference>
<dbReference type="NCBIfam" id="NF010026">
    <property type="entry name" value="PRK13501.1"/>
    <property type="match status" value="1"/>
</dbReference>
<dbReference type="NCBIfam" id="NF010027">
    <property type="entry name" value="PRK13502.1"/>
    <property type="match status" value="1"/>
</dbReference>
<dbReference type="PANTHER" id="PTHR43280">
    <property type="entry name" value="ARAC-FAMILY TRANSCRIPTIONAL REGULATOR"/>
    <property type="match status" value="1"/>
</dbReference>
<dbReference type="PANTHER" id="PTHR43280:SF13">
    <property type="entry name" value="HTH-TYPE TRANSCRIPTIONAL ACTIVATOR RHAR"/>
    <property type="match status" value="1"/>
</dbReference>
<dbReference type="Pfam" id="PF02311">
    <property type="entry name" value="AraC_binding"/>
    <property type="match status" value="1"/>
</dbReference>
<dbReference type="Pfam" id="PF12833">
    <property type="entry name" value="HTH_18"/>
    <property type="match status" value="1"/>
</dbReference>
<dbReference type="PRINTS" id="PR00032">
    <property type="entry name" value="HTHARAC"/>
</dbReference>
<dbReference type="SMART" id="SM00342">
    <property type="entry name" value="HTH_ARAC"/>
    <property type="match status" value="1"/>
</dbReference>
<dbReference type="SUPFAM" id="SSF46689">
    <property type="entry name" value="Homeodomain-like"/>
    <property type="match status" value="1"/>
</dbReference>
<dbReference type="SUPFAM" id="SSF51182">
    <property type="entry name" value="RmlC-like cupins"/>
    <property type="match status" value="1"/>
</dbReference>
<dbReference type="PROSITE" id="PS00041">
    <property type="entry name" value="HTH_ARAC_FAMILY_1"/>
    <property type="match status" value="1"/>
</dbReference>
<dbReference type="PROSITE" id="PS01124">
    <property type="entry name" value="HTH_ARAC_FAMILY_2"/>
    <property type="match status" value="1"/>
</dbReference>
<comment type="function">
    <text evidence="1">Activates expression of the rhaSR operon in response to L-rhamnose.</text>
</comment>
<comment type="subunit">
    <text evidence="1">Binds DNA as a dimer.</text>
</comment>
<comment type="subcellular location">
    <subcellularLocation>
        <location evidence="1">Cytoplasm</location>
    </subcellularLocation>
</comment>
<keyword id="KW-0010">Activator</keyword>
<keyword id="KW-0963">Cytoplasm</keyword>
<keyword id="KW-0238">DNA-binding</keyword>
<keyword id="KW-0677">Repeat</keyword>
<keyword id="KW-0684">Rhamnose metabolism</keyword>
<keyword id="KW-0804">Transcription</keyword>
<keyword id="KW-0805">Transcription regulation</keyword>
<feature type="chain" id="PRO_0000194556" description="HTH-type transcriptional activator RhaR">
    <location>
        <begin position="1"/>
        <end position="282"/>
    </location>
</feature>
<feature type="domain" description="HTH araC/xylS-type" evidence="1">
    <location>
        <begin position="179"/>
        <end position="277"/>
    </location>
</feature>
<feature type="DNA-binding region" description="H-T-H motif" evidence="1">
    <location>
        <begin position="196"/>
        <end position="217"/>
    </location>
</feature>
<feature type="DNA-binding region" description="H-T-H motif" evidence="1">
    <location>
        <begin position="244"/>
        <end position="267"/>
    </location>
</feature>
<feature type="site" description="Interaction with sigma-70" evidence="1">
    <location>
        <position position="246"/>
    </location>
</feature>
<sequence>MANQLILLKKDFFTDEQQAVTVADRYPQDIFAEHTHEFCELVMVWRGNGLHVLNERPYRITRGDLFYIRAEDQHSYTSVNDLVLQNIIYCPERLKLNVNWQAMIPGFQGAQWHPHWRLGSMGMNQARQVINQLEHESNGRDPLANEMAELLFGQLVMTLKRHRYATDDLPATSRETLLDKLITALANSLECPFALDAFCQQEQCSERVLRQQFRAQTGMTINQYLRQVRICHAQYLLQHSPLMVSEISMQCGFEDSNYFSVVFTRETGMTPSQWRHLSNQSD</sequence>
<proteinExistence type="inferred from homology"/>
<name>RHAR_SALCH</name>
<gene>
    <name evidence="1" type="primary">rhaR</name>
    <name type="ordered locus">SCH_3939</name>
</gene>